<proteinExistence type="inferred from homology"/>
<accession>P96663</accession>
<accession>Q797I5</accession>
<name>YDEF_BACSU</name>
<sequence length="462" mass="51403">MPINSFENYPMSWKPSIDKAEKPIYKALAGQLEQDILNGVLLPGTKLPPQRELADYLDLNVSTISKAFKVCELKGLLSATVGSGTFVSYDALSNAYLLEDTKPTHLIEMGAILPDHASYEPLLYQLKNMVHEEDYEKWFSYGRAGESLWQKDAAVKLIQRGGFETSVDHILFANGGQNAIAATLASLCKPGDRIGVDHHTYPGLKTVASLLSVQIVPIKSENDEMSPESLEYACKNENIKGLYLIPDYHNPTTSFMSVENRRMVADIVKKYNLFVIEDASYHLLNKNPLPALASFAPQQVIHIASLSKSLAPGLRLAYVAVPRQYKEPISKALYNLNITVSPLLAELTARTIVSNQFEVLIESHREQTIRRNQLVNRYVAGYTCLGVETGIFRWLLLPGKMSGAEFEELAARLGVQVYAAERFVVGNSCPERAVRVSVCAPKTLEELEQGLMILRRLLDDLT</sequence>
<gene>
    <name type="primary">ydeF</name>
    <name type="ordered locus">BSU05180</name>
</gene>
<dbReference type="EMBL" id="AB001488">
    <property type="protein sequence ID" value="BAA19353.1"/>
    <property type="status" value="ALT_INIT"/>
    <property type="molecule type" value="Genomic_DNA"/>
</dbReference>
<dbReference type="EMBL" id="AL009126">
    <property type="protein sequence ID" value="CAB12325.2"/>
    <property type="molecule type" value="Genomic_DNA"/>
</dbReference>
<dbReference type="PIR" id="H69777">
    <property type="entry name" value="H69777"/>
</dbReference>
<dbReference type="RefSeq" id="NP_388399.2">
    <property type="nucleotide sequence ID" value="NC_000964.3"/>
</dbReference>
<dbReference type="RefSeq" id="WP_003244576.1">
    <property type="nucleotide sequence ID" value="NZ_OZ025638.1"/>
</dbReference>
<dbReference type="SMR" id="P96663"/>
<dbReference type="FunCoup" id="P96663">
    <property type="interactions" value="93"/>
</dbReference>
<dbReference type="STRING" id="224308.BSU05180"/>
<dbReference type="PaxDb" id="224308-BSU05180"/>
<dbReference type="EnsemblBacteria" id="CAB12325">
    <property type="protein sequence ID" value="CAB12325"/>
    <property type="gene ID" value="BSU_05180"/>
</dbReference>
<dbReference type="GeneID" id="939911"/>
<dbReference type="KEGG" id="bsu:BSU05180"/>
<dbReference type="PATRIC" id="fig|224308.179.peg.553"/>
<dbReference type="eggNOG" id="COG1167">
    <property type="taxonomic scope" value="Bacteria"/>
</dbReference>
<dbReference type="InParanoid" id="P96663"/>
<dbReference type="OrthoDB" id="9802601at2"/>
<dbReference type="BioCyc" id="BSUB:BSU05180-MONOMER"/>
<dbReference type="Proteomes" id="UP000001570">
    <property type="component" value="Chromosome"/>
</dbReference>
<dbReference type="GO" id="GO:0003677">
    <property type="term" value="F:DNA binding"/>
    <property type="evidence" value="ECO:0007669"/>
    <property type="project" value="UniProtKB-KW"/>
</dbReference>
<dbReference type="GO" id="GO:0003700">
    <property type="term" value="F:DNA-binding transcription factor activity"/>
    <property type="evidence" value="ECO:0007669"/>
    <property type="project" value="InterPro"/>
</dbReference>
<dbReference type="GO" id="GO:0030170">
    <property type="term" value="F:pyridoxal phosphate binding"/>
    <property type="evidence" value="ECO:0007669"/>
    <property type="project" value="InterPro"/>
</dbReference>
<dbReference type="GO" id="GO:0008483">
    <property type="term" value="F:transaminase activity"/>
    <property type="evidence" value="ECO:0007669"/>
    <property type="project" value="UniProtKB-KW"/>
</dbReference>
<dbReference type="GO" id="GO:0009058">
    <property type="term" value="P:biosynthetic process"/>
    <property type="evidence" value="ECO:0007669"/>
    <property type="project" value="InterPro"/>
</dbReference>
<dbReference type="CDD" id="cd00609">
    <property type="entry name" value="AAT_like"/>
    <property type="match status" value="1"/>
</dbReference>
<dbReference type="CDD" id="cd07377">
    <property type="entry name" value="WHTH_GntR"/>
    <property type="match status" value="1"/>
</dbReference>
<dbReference type="Gene3D" id="3.90.1150.10">
    <property type="entry name" value="Aspartate Aminotransferase, domain 1"/>
    <property type="match status" value="1"/>
</dbReference>
<dbReference type="Gene3D" id="3.40.640.10">
    <property type="entry name" value="Type I PLP-dependent aspartate aminotransferase-like (Major domain)"/>
    <property type="match status" value="1"/>
</dbReference>
<dbReference type="Gene3D" id="1.10.10.10">
    <property type="entry name" value="Winged helix-like DNA-binding domain superfamily/Winged helix DNA-binding domain"/>
    <property type="match status" value="1"/>
</dbReference>
<dbReference type="InterPro" id="IPR004839">
    <property type="entry name" value="Aminotransferase_I/II_large"/>
</dbReference>
<dbReference type="InterPro" id="IPR051446">
    <property type="entry name" value="HTH_trans_reg/aminotransferase"/>
</dbReference>
<dbReference type="InterPro" id="IPR015424">
    <property type="entry name" value="PyrdxlP-dep_Trfase"/>
</dbReference>
<dbReference type="InterPro" id="IPR015421">
    <property type="entry name" value="PyrdxlP-dep_Trfase_major"/>
</dbReference>
<dbReference type="InterPro" id="IPR015422">
    <property type="entry name" value="PyrdxlP-dep_Trfase_small"/>
</dbReference>
<dbReference type="InterPro" id="IPR000524">
    <property type="entry name" value="Tscrpt_reg_HTH_GntR"/>
</dbReference>
<dbReference type="InterPro" id="IPR036388">
    <property type="entry name" value="WH-like_DNA-bd_sf"/>
</dbReference>
<dbReference type="InterPro" id="IPR036390">
    <property type="entry name" value="WH_DNA-bd_sf"/>
</dbReference>
<dbReference type="PANTHER" id="PTHR46577">
    <property type="entry name" value="HTH-TYPE TRANSCRIPTIONAL REGULATORY PROTEIN GABR"/>
    <property type="match status" value="1"/>
</dbReference>
<dbReference type="PANTHER" id="PTHR46577:SF1">
    <property type="entry name" value="HTH-TYPE TRANSCRIPTIONAL REGULATORY PROTEIN GABR"/>
    <property type="match status" value="1"/>
</dbReference>
<dbReference type="Pfam" id="PF00155">
    <property type="entry name" value="Aminotran_1_2"/>
    <property type="match status" value="1"/>
</dbReference>
<dbReference type="Pfam" id="PF00392">
    <property type="entry name" value="GntR"/>
    <property type="match status" value="1"/>
</dbReference>
<dbReference type="SMART" id="SM00345">
    <property type="entry name" value="HTH_GNTR"/>
    <property type="match status" value="1"/>
</dbReference>
<dbReference type="SUPFAM" id="SSF53383">
    <property type="entry name" value="PLP-dependent transferases"/>
    <property type="match status" value="1"/>
</dbReference>
<dbReference type="SUPFAM" id="SSF46785">
    <property type="entry name" value="Winged helix' DNA-binding domain"/>
    <property type="match status" value="1"/>
</dbReference>
<dbReference type="PROSITE" id="PS50949">
    <property type="entry name" value="HTH_GNTR"/>
    <property type="match status" value="1"/>
</dbReference>
<keyword id="KW-0032">Aminotransferase</keyword>
<keyword id="KW-0238">DNA-binding</keyword>
<keyword id="KW-0663">Pyridoxal phosphate</keyword>
<keyword id="KW-1185">Reference proteome</keyword>
<keyword id="KW-0804">Transcription</keyword>
<keyword id="KW-0805">Transcription regulation</keyword>
<keyword id="KW-0808">Transferase</keyword>
<feature type="chain" id="PRO_0000360695" description="Uncharacterized HTH-type transcriptional regulator YdeF">
    <location>
        <begin position="1"/>
        <end position="462"/>
    </location>
</feature>
<feature type="domain" description="HTH gntR-type" evidence="2">
    <location>
        <begin position="22"/>
        <end position="90"/>
    </location>
</feature>
<feature type="DNA-binding region" description="H-T-H motif" evidence="2">
    <location>
        <begin position="50"/>
        <end position="69"/>
    </location>
</feature>
<feature type="modified residue" description="N6-(pyridoxal phosphate)lysine" evidence="1">
    <location>
        <position position="308"/>
    </location>
</feature>
<protein>
    <recommendedName>
        <fullName>Uncharacterized HTH-type transcriptional regulator YdeF</fullName>
    </recommendedName>
</protein>
<comment type="cofactor">
    <cofactor evidence="1">
        <name>pyridoxal 5'-phosphate</name>
        <dbReference type="ChEBI" id="CHEBI:597326"/>
    </cofactor>
</comment>
<comment type="similarity">
    <text evidence="3">In the C-terminal section; belongs to the class-I pyridoxal-phosphate-dependent aminotransferase family.</text>
</comment>
<comment type="sequence caution" evidence="3">
    <conflict type="erroneous initiation">
        <sequence resource="EMBL-CDS" id="BAA19353"/>
    </conflict>
    <text>Extended N-terminus.</text>
</comment>
<organism>
    <name type="scientific">Bacillus subtilis (strain 168)</name>
    <dbReference type="NCBI Taxonomy" id="224308"/>
    <lineage>
        <taxon>Bacteria</taxon>
        <taxon>Bacillati</taxon>
        <taxon>Bacillota</taxon>
        <taxon>Bacilli</taxon>
        <taxon>Bacillales</taxon>
        <taxon>Bacillaceae</taxon>
        <taxon>Bacillus</taxon>
    </lineage>
</organism>
<evidence type="ECO:0000250" key="1"/>
<evidence type="ECO:0000255" key="2">
    <source>
        <dbReference type="PROSITE-ProRule" id="PRU00307"/>
    </source>
</evidence>
<evidence type="ECO:0000305" key="3"/>
<reference key="1">
    <citation type="submission" date="1997-03" db="EMBL/GenBank/DDBJ databases">
        <title>A 148 kbp sequence of the region between 35 and 47 degree of the Bacillus subtilis genome.</title>
        <authorList>
            <person name="Kasahara Y."/>
            <person name="Nakai S."/>
            <person name="Lee S."/>
            <person name="Sadaie Y."/>
            <person name="Ogasawara N."/>
        </authorList>
    </citation>
    <scope>NUCLEOTIDE SEQUENCE [GENOMIC DNA]</scope>
    <source>
        <strain>168</strain>
    </source>
</reference>
<reference key="2">
    <citation type="journal article" date="1997" name="Nature">
        <title>The complete genome sequence of the Gram-positive bacterium Bacillus subtilis.</title>
        <authorList>
            <person name="Kunst F."/>
            <person name="Ogasawara N."/>
            <person name="Moszer I."/>
            <person name="Albertini A.M."/>
            <person name="Alloni G."/>
            <person name="Azevedo V."/>
            <person name="Bertero M.G."/>
            <person name="Bessieres P."/>
            <person name="Bolotin A."/>
            <person name="Borchert S."/>
            <person name="Borriss R."/>
            <person name="Boursier L."/>
            <person name="Brans A."/>
            <person name="Braun M."/>
            <person name="Brignell S.C."/>
            <person name="Bron S."/>
            <person name="Brouillet S."/>
            <person name="Bruschi C.V."/>
            <person name="Caldwell B."/>
            <person name="Capuano V."/>
            <person name="Carter N.M."/>
            <person name="Choi S.-K."/>
            <person name="Codani J.-J."/>
            <person name="Connerton I.F."/>
            <person name="Cummings N.J."/>
            <person name="Daniel R.A."/>
            <person name="Denizot F."/>
            <person name="Devine K.M."/>
            <person name="Duesterhoeft A."/>
            <person name="Ehrlich S.D."/>
            <person name="Emmerson P.T."/>
            <person name="Entian K.-D."/>
            <person name="Errington J."/>
            <person name="Fabret C."/>
            <person name="Ferrari E."/>
            <person name="Foulger D."/>
            <person name="Fritz C."/>
            <person name="Fujita M."/>
            <person name="Fujita Y."/>
            <person name="Fuma S."/>
            <person name="Galizzi A."/>
            <person name="Galleron N."/>
            <person name="Ghim S.-Y."/>
            <person name="Glaser P."/>
            <person name="Goffeau A."/>
            <person name="Golightly E.J."/>
            <person name="Grandi G."/>
            <person name="Guiseppi G."/>
            <person name="Guy B.J."/>
            <person name="Haga K."/>
            <person name="Haiech J."/>
            <person name="Harwood C.R."/>
            <person name="Henaut A."/>
            <person name="Hilbert H."/>
            <person name="Holsappel S."/>
            <person name="Hosono S."/>
            <person name="Hullo M.-F."/>
            <person name="Itaya M."/>
            <person name="Jones L.-M."/>
            <person name="Joris B."/>
            <person name="Karamata D."/>
            <person name="Kasahara Y."/>
            <person name="Klaerr-Blanchard M."/>
            <person name="Klein C."/>
            <person name="Kobayashi Y."/>
            <person name="Koetter P."/>
            <person name="Koningstein G."/>
            <person name="Krogh S."/>
            <person name="Kumano M."/>
            <person name="Kurita K."/>
            <person name="Lapidus A."/>
            <person name="Lardinois S."/>
            <person name="Lauber J."/>
            <person name="Lazarevic V."/>
            <person name="Lee S.-M."/>
            <person name="Levine A."/>
            <person name="Liu H."/>
            <person name="Masuda S."/>
            <person name="Mauel C."/>
            <person name="Medigue C."/>
            <person name="Medina N."/>
            <person name="Mellado R.P."/>
            <person name="Mizuno M."/>
            <person name="Moestl D."/>
            <person name="Nakai S."/>
            <person name="Noback M."/>
            <person name="Noone D."/>
            <person name="O'Reilly M."/>
            <person name="Ogawa K."/>
            <person name="Ogiwara A."/>
            <person name="Oudega B."/>
            <person name="Park S.-H."/>
            <person name="Parro V."/>
            <person name="Pohl T.M."/>
            <person name="Portetelle D."/>
            <person name="Porwollik S."/>
            <person name="Prescott A.M."/>
            <person name="Presecan E."/>
            <person name="Pujic P."/>
            <person name="Purnelle B."/>
            <person name="Rapoport G."/>
            <person name="Rey M."/>
            <person name="Reynolds S."/>
            <person name="Rieger M."/>
            <person name="Rivolta C."/>
            <person name="Rocha E."/>
            <person name="Roche B."/>
            <person name="Rose M."/>
            <person name="Sadaie Y."/>
            <person name="Sato T."/>
            <person name="Scanlan E."/>
            <person name="Schleich S."/>
            <person name="Schroeter R."/>
            <person name="Scoffone F."/>
            <person name="Sekiguchi J."/>
            <person name="Sekowska A."/>
            <person name="Seror S.J."/>
            <person name="Serror P."/>
            <person name="Shin B.-S."/>
            <person name="Soldo B."/>
            <person name="Sorokin A."/>
            <person name="Tacconi E."/>
            <person name="Takagi T."/>
            <person name="Takahashi H."/>
            <person name="Takemaru K."/>
            <person name="Takeuchi M."/>
            <person name="Tamakoshi A."/>
            <person name="Tanaka T."/>
            <person name="Terpstra P."/>
            <person name="Tognoni A."/>
            <person name="Tosato V."/>
            <person name="Uchiyama S."/>
            <person name="Vandenbol M."/>
            <person name="Vannier F."/>
            <person name="Vassarotti A."/>
            <person name="Viari A."/>
            <person name="Wambutt R."/>
            <person name="Wedler E."/>
            <person name="Wedler H."/>
            <person name="Weitzenegger T."/>
            <person name="Winters P."/>
            <person name="Wipat A."/>
            <person name="Yamamoto H."/>
            <person name="Yamane K."/>
            <person name="Yasumoto K."/>
            <person name="Yata K."/>
            <person name="Yoshida K."/>
            <person name="Yoshikawa H.-F."/>
            <person name="Zumstein E."/>
            <person name="Yoshikawa H."/>
            <person name="Danchin A."/>
        </authorList>
    </citation>
    <scope>NUCLEOTIDE SEQUENCE [LARGE SCALE GENOMIC DNA]</scope>
    <source>
        <strain>168</strain>
    </source>
</reference>
<reference key="3">
    <citation type="journal article" date="2002" name="Mol. Microbiol.">
        <title>GabR, a member of a novel protein family, regulates the utilization of gamma-aminobutyrate in Bacillus subtilis.</title>
        <authorList>
            <person name="Belitsky B.R."/>
            <person name="Sonenshein A.L."/>
        </authorList>
    </citation>
    <scope>GENE FAMILY</scope>
</reference>